<evidence type="ECO:0000255" key="1"/>
<evidence type="ECO:0000303" key="2">
    <source>
    </source>
</evidence>
<evidence type="ECO:0000305" key="3"/>
<evidence type="ECO:0000305" key="4">
    <source>
    </source>
</evidence>
<accession>P0DQG3</accession>
<protein>
    <recommendedName>
        <fullName evidence="2">U-scoloptoxin(16)-Er9a</fullName>
        <shortName evidence="2">U-SLPTX(16)-Er9a</shortName>
    </recommendedName>
</protein>
<sequence length="98" mass="10661">MVSYLCMSVSSGWLSIGKIAIKDGKCDPKNGNLYAIGEKWYNDEDCFEITCIQGDKGSVAQQVASCPVHAVKPGCELVFPGGTYPKCCPYYECPKLVI</sequence>
<feature type="signal peptide" evidence="1">
    <location>
        <begin position="1"/>
        <end position="24"/>
    </location>
</feature>
<feature type="chain" id="PRO_0000446816" description="U-scoloptoxin(16)-Er9a" evidence="3">
    <location>
        <begin position="25"/>
        <end position="98"/>
    </location>
</feature>
<organism>
    <name type="scientific">Ethmostigmus rubripes</name>
    <name type="common">Giant centipede</name>
    <dbReference type="NCBI Taxonomy" id="62613"/>
    <lineage>
        <taxon>Eukaryota</taxon>
        <taxon>Metazoa</taxon>
        <taxon>Ecdysozoa</taxon>
        <taxon>Arthropoda</taxon>
        <taxon>Myriapoda</taxon>
        <taxon>Chilopoda</taxon>
        <taxon>Pleurostigmophora</taxon>
        <taxon>Scolopendromorpha</taxon>
        <taxon>Scolopendridae</taxon>
        <taxon>Ethmostigmus</taxon>
    </lineage>
</organism>
<reference key="1">
    <citation type="journal article" date="2014" name="Mol. Biol. Evol.">
        <title>Clawing through evolution: toxin diversification and convergence in the ancient lineage Chilopoda (centipedes).</title>
        <authorList>
            <person name="Undheim E.A."/>
            <person name="Jones A."/>
            <person name="Clauser K.R."/>
            <person name="Holland J.W."/>
            <person name="Pineda S.S."/>
            <person name="King G.F."/>
            <person name="Fry B.G."/>
        </authorList>
    </citation>
    <scope>NUCLEOTIDE SEQUENCE [MRNA]</scope>
    <scope>NOMENCLATURE</scope>
    <source>
        <tissue>Venom gland</tissue>
    </source>
</reference>
<comment type="subcellular location">
    <subcellularLocation>
        <location evidence="4">Secreted</location>
    </subcellularLocation>
</comment>
<comment type="tissue specificity">
    <text evidence="4">Expressed by the venom gland.</text>
</comment>
<comment type="PTM">
    <text evidence="3">Contains 4 disulfide bonds.</text>
</comment>
<comment type="similarity">
    <text evidence="3">Belongs to the scoloptoxin-16 family.</text>
</comment>
<comment type="caution">
    <text evidence="4">All E.rubripes family members described in 'Undeheim et al., 2014' have not been imported into UniProtKB. Please, refer to this paper to access them.</text>
</comment>
<comment type="online information" name="National Center for Biotechnology Information (NCBI)">
    <link uri="https://www.ncbi.nlm.nih.gov/nuccore/GASI01000155"/>
</comment>
<proteinExistence type="inferred from homology"/>
<dbReference type="SMR" id="P0DQG3"/>
<dbReference type="GO" id="GO:0005576">
    <property type="term" value="C:extracellular region"/>
    <property type="evidence" value="ECO:0007669"/>
    <property type="project" value="UniProtKB-SubCell"/>
</dbReference>
<dbReference type="GO" id="GO:0090729">
    <property type="term" value="F:toxin activity"/>
    <property type="evidence" value="ECO:0007669"/>
    <property type="project" value="UniProtKB-KW"/>
</dbReference>
<dbReference type="InterPro" id="IPR029277">
    <property type="entry name" value="SVWC_dom"/>
</dbReference>
<dbReference type="Pfam" id="PF15430">
    <property type="entry name" value="SVWC"/>
    <property type="match status" value="1"/>
</dbReference>
<dbReference type="SMART" id="SM01318">
    <property type="entry name" value="SVWC"/>
    <property type="match status" value="1"/>
</dbReference>
<name>TXG9A_ETHRU</name>
<keyword id="KW-1015">Disulfide bond</keyword>
<keyword id="KW-0964">Secreted</keyword>
<keyword id="KW-0732">Signal</keyword>
<keyword id="KW-0800">Toxin</keyword>